<gene>
    <name evidence="1" type="primary">cmk</name>
    <name type="ordered locus">PTH_1617</name>
</gene>
<evidence type="ECO:0000255" key="1">
    <source>
        <dbReference type="HAMAP-Rule" id="MF_00238"/>
    </source>
</evidence>
<reference key="1">
    <citation type="journal article" date="2008" name="Genome Res.">
        <title>The genome of Pelotomaculum thermopropionicum reveals niche-associated evolution in anaerobic microbiota.</title>
        <authorList>
            <person name="Kosaka T."/>
            <person name="Kato S."/>
            <person name="Shimoyama T."/>
            <person name="Ishii S."/>
            <person name="Abe T."/>
            <person name="Watanabe K."/>
        </authorList>
    </citation>
    <scope>NUCLEOTIDE SEQUENCE [LARGE SCALE GENOMIC DNA]</scope>
    <source>
        <strain>DSM 13744 / JCM 10971 / SI</strain>
    </source>
</reference>
<name>KCY_PELTS</name>
<proteinExistence type="inferred from homology"/>
<comment type="catalytic activity">
    <reaction evidence="1">
        <text>CMP + ATP = CDP + ADP</text>
        <dbReference type="Rhea" id="RHEA:11600"/>
        <dbReference type="ChEBI" id="CHEBI:30616"/>
        <dbReference type="ChEBI" id="CHEBI:58069"/>
        <dbReference type="ChEBI" id="CHEBI:60377"/>
        <dbReference type="ChEBI" id="CHEBI:456216"/>
        <dbReference type="EC" id="2.7.4.25"/>
    </reaction>
</comment>
<comment type="catalytic activity">
    <reaction evidence="1">
        <text>dCMP + ATP = dCDP + ADP</text>
        <dbReference type="Rhea" id="RHEA:25094"/>
        <dbReference type="ChEBI" id="CHEBI:30616"/>
        <dbReference type="ChEBI" id="CHEBI:57566"/>
        <dbReference type="ChEBI" id="CHEBI:58593"/>
        <dbReference type="ChEBI" id="CHEBI:456216"/>
        <dbReference type="EC" id="2.7.4.25"/>
    </reaction>
</comment>
<comment type="subcellular location">
    <subcellularLocation>
        <location evidence="1">Cytoplasm</location>
    </subcellularLocation>
</comment>
<comment type="similarity">
    <text evidence="1">Belongs to the cytidylate kinase family. Type 1 subfamily.</text>
</comment>
<protein>
    <recommendedName>
        <fullName evidence="1">Cytidylate kinase</fullName>
        <shortName evidence="1">CK</shortName>
        <ecNumber evidence="1">2.7.4.25</ecNumber>
    </recommendedName>
    <alternativeName>
        <fullName evidence="1">Cytidine monophosphate kinase</fullName>
        <shortName evidence="1">CMP kinase</shortName>
    </alternativeName>
</protein>
<accession>A5D1V4</accession>
<dbReference type="EC" id="2.7.4.25" evidence="1"/>
<dbReference type="EMBL" id="AP009389">
    <property type="protein sequence ID" value="BAF59798.1"/>
    <property type="molecule type" value="Genomic_DNA"/>
</dbReference>
<dbReference type="SMR" id="A5D1V4"/>
<dbReference type="STRING" id="370438.PTH_1617"/>
<dbReference type="KEGG" id="pth:PTH_1617"/>
<dbReference type="eggNOG" id="COG0283">
    <property type="taxonomic scope" value="Bacteria"/>
</dbReference>
<dbReference type="HOGENOM" id="CLU_079959_0_2_9"/>
<dbReference type="Proteomes" id="UP000006556">
    <property type="component" value="Chromosome"/>
</dbReference>
<dbReference type="GO" id="GO:0005829">
    <property type="term" value="C:cytosol"/>
    <property type="evidence" value="ECO:0007669"/>
    <property type="project" value="TreeGrafter"/>
</dbReference>
<dbReference type="GO" id="GO:0005524">
    <property type="term" value="F:ATP binding"/>
    <property type="evidence" value="ECO:0007669"/>
    <property type="project" value="UniProtKB-UniRule"/>
</dbReference>
<dbReference type="GO" id="GO:0036430">
    <property type="term" value="F:CMP kinase activity"/>
    <property type="evidence" value="ECO:0007669"/>
    <property type="project" value="RHEA"/>
</dbReference>
<dbReference type="GO" id="GO:0036431">
    <property type="term" value="F:dCMP kinase activity"/>
    <property type="evidence" value="ECO:0007669"/>
    <property type="project" value="RHEA"/>
</dbReference>
<dbReference type="GO" id="GO:0015949">
    <property type="term" value="P:nucleobase-containing small molecule interconversion"/>
    <property type="evidence" value="ECO:0007669"/>
    <property type="project" value="TreeGrafter"/>
</dbReference>
<dbReference type="GO" id="GO:0006220">
    <property type="term" value="P:pyrimidine nucleotide metabolic process"/>
    <property type="evidence" value="ECO:0007669"/>
    <property type="project" value="UniProtKB-UniRule"/>
</dbReference>
<dbReference type="CDD" id="cd02020">
    <property type="entry name" value="CMPK"/>
    <property type="match status" value="1"/>
</dbReference>
<dbReference type="Gene3D" id="3.40.50.300">
    <property type="entry name" value="P-loop containing nucleotide triphosphate hydrolases"/>
    <property type="match status" value="1"/>
</dbReference>
<dbReference type="HAMAP" id="MF_00238">
    <property type="entry name" value="Cytidyl_kinase_type1"/>
    <property type="match status" value="1"/>
</dbReference>
<dbReference type="InterPro" id="IPR003136">
    <property type="entry name" value="Cytidylate_kin"/>
</dbReference>
<dbReference type="InterPro" id="IPR011994">
    <property type="entry name" value="Cytidylate_kinase_dom"/>
</dbReference>
<dbReference type="InterPro" id="IPR027417">
    <property type="entry name" value="P-loop_NTPase"/>
</dbReference>
<dbReference type="NCBIfam" id="TIGR00017">
    <property type="entry name" value="cmk"/>
    <property type="match status" value="1"/>
</dbReference>
<dbReference type="PANTHER" id="PTHR21299:SF2">
    <property type="entry name" value="CYTIDYLATE KINASE"/>
    <property type="match status" value="1"/>
</dbReference>
<dbReference type="PANTHER" id="PTHR21299">
    <property type="entry name" value="CYTIDYLATE KINASE/PANTOATE-BETA-ALANINE LIGASE"/>
    <property type="match status" value="1"/>
</dbReference>
<dbReference type="Pfam" id="PF02224">
    <property type="entry name" value="Cytidylate_kin"/>
    <property type="match status" value="1"/>
</dbReference>
<dbReference type="SUPFAM" id="SSF52540">
    <property type="entry name" value="P-loop containing nucleoside triphosphate hydrolases"/>
    <property type="match status" value="1"/>
</dbReference>
<feature type="chain" id="PRO_1000078342" description="Cytidylate kinase">
    <location>
        <begin position="1"/>
        <end position="226"/>
    </location>
</feature>
<feature type="binding site" evidence="1">
    <location>
        <begin position="11"/>
        <end position="19"/>
    </location>
    <ligand>
        <name>ATP</name>
        <dbReference type="ChEBI" id="CHEBI:30616"/>
    </ligand>
</feature>
<keyword id="KW-0067">ATP-binding</keyword>
<keyword id="KW-0963">Cytoplasm</keyword>
<keyword id="KW-0418">Kinase</keyword>
<keyword id="KW-0547">Nucleotide-binding</keyword>
<keyword id="KW-1185">Reference proteome</keyword>
<keyword id="KW-0808">Transferase</keyword>
<sequence length="226" mass="24335">MNSFPNIAIDGPAGAGKSTVARLLSKELGFLYIDTGAMYRAVALKAIRKGVDLADQPGLSRLAAVTSVNLKTDAEGNLRVFLDGEDVTEEIRSPAVSKAVSLVARVPAVRERLVELQRAMASGGGVVMEGRDIGTVVLPDAEIKIFLTASPEERARRRREELAARGYIVDQHQMVNEITERDRIDTTRAAGPLVPAADAEIIDCSSMPVEKVVKMIVARVSAGRRE</sequence>
<organism>
    <name type="scientific">Pelotomaculum thermopropionicum (strain DSM 13744 / JCM 10971 / SI)</name>
    <dbReference type="NCBI Taxonomy" id="370438"/>
    <lineage>
        <taxon>Bacteria</taxon>
        <taxon>Bacillati</taxon>
        <taxon>Bacillota</taxon>
        <taxon>Clostridia</taxon>
        <taxon>Eubacteriales</taxon>
        <taxon>Desulfotomaculaceae</taxon>
        <taxon>Pelotomaculum</taxon>
    </lineage>
</organism>